<feature type="initiator methionine" description="Removed" evidence="1">
    <location>
        <position position="1"/>
    </location>
</feature>
<feature type="chain" id="PRO_0000300241" description="Oleosin 18 kDa">
    <location>
        <begin position="2"/>
        <end position="172"/>
    </location>
</feature>
<feature type="transmembrane region" description="Helical" evidence="2">
    <location>
        <begin position="42"/>
        <end position="62"/>
    </location>
</feature>
<feature type="transmembrane region" description="Helical" evidence="2">
    <location>
        <begin position="70"/>
        <end position="90"/>
    </location>
</feature>
<feature type="transmembrane region" description="Helical" evidence="2">
    <location>
        <begin position="91"/>
        <end position="111"/>
    </location>
</feature>
<feature type="region of interest" description="Polar">
    <location>
        <begin position="2"/>
        <end position="38"/>
    </location>
</feature>
<feature type="region of interest" description="Hydrophobic">
    <location>
        <begin position="39"/>
        <end position="110"/>
    </location>
</feature>
<feature type="region of interest" description="Disordered" evidence="3">
    <location>
        <begin position="147"/>
        <end position="172"/>
    </location>
</feature>
<feature type="compositionally biased region" description="Gly residues" evidence="3">
    <location>
        <begin position="158"/>
        <end position="172"/>
    </location>
</feature>
<feature type="modified residue" description="N-acetylalanine" evidence="1">
    <location>
        <position position="2"/>
    </location>
</feature>
<feature type="sequence conflict" description="In Ref. 1; AAD10240." evidence="4" ref="1">
    <original>A</original>
    <variation>D</variation>
    <location>
        <position position="67"/>
    </location>
</feature>
<feature type="sequence conflict" description="In Ref. 1; AAD10240." evidence="4" ref="1">
    <original>G</original>
    <variation>A</variation>
    <location>
        <position position="146"/>
    </location>
</feature>
<sequence>MADRDRAGQYYQQQRGQVGETVKGILPEKAPSASQALTVATLFPLGGLLLVLSGLALAASVVGLAVATPVFLIFSPVLVPAALLIGLAVAGFLTSGALGLGGLSSLTFLANTARQAFQRTPDYVEQARRRMAEAAAHAGHKTAQAGHAIQGRADQAGTGAGAGGGAGTKTSS</sequence>
<comment type="function">
    <text>May have a structural role to stabilize the lipid body during desiccation of the seed by preventing coalescence of the oil. Probably interacts with both lipid and phospholipid moieties of lipid bodies. May also provide recognition signals for specific lipase anchorage in lipolysis during seedling growth.</text>
</comment>
<comment type="subcellular location">
    <subcellularLocation>
        <location>Lipid droplet</location>
    </subcellularLocation>
    <subcellularLocation>
        <location>Membrane</location>
        <topology>Multi-pass membrane protein</topology>
    </subcellularLocation>
    <text>Surface of oil bodies. Oleosins exist at a monolayer lipid/water interface.</text>
</comment>
<comment type="similarity">
    <text evidence="4">Belongs to the oleosin family.</text>
</comment>
<reference key="1">
    <citation type="submission" date="1997-08" db="EMBL/GenBank/DDBJ databases">
        <title>Oryza sativa subsp. indica 18 kDa oleosin (ole18) gene.</title>
        <authorList>
            <person name="Wang L.D."/>
            <person name="Chen L.J."/>
        </authorList>
    </citation>
    <scope>NUCLEOTIDE SEQUENCE [GENOMIC DNA]</scope>
    <source>
        <strain>cv. IR36</strain>
    </source>
</reference>
<reference key="2">
    <citation type="journal article" date="2005" name="PLoS Biol.">
        <title>The genomes of Oryza sativa: a history of duplications.</title>
        <authorList>
            <person name="Yu J."/>
            <person name="Wang J."/>
            <person name="Lin W."/>
            <person name="Li S."/>
            <person name="Li H."/>
            <person name="Zhou J."/>
            <person name="Ni P."/>
            <person name="Dong W."/>
            <person name="Hu S."/>
            <person name="Zeng C."/>
            <person name="Zhang J."/>
            <person name="Zhang Y."/>
            <person name="Li R."/>
            <person name="Xu Z."/>
            <person name="Li S."/>
            <person name="Li X."/>
            <person name="Zheng H."/>
            <person name="Cong L."/>
            <person name="Lin L."/>
            <person name="Yin J."/>
            <person name="Geng J."/>
            <person name="Li G."/>
            <person name="Shi J."/>
            <person name="Liu J."/>
            <person name="Lv H."/>
            <person name="Li J."/>
            <person name="Wang J."/>
            <person name="Deng Y."/>
            <person name="Ran L."/>
            <person name="Shi X."/>
            <person name="Wang X."/>
            <person name="Wu Q."/>
            <person name="Li C."/>
            <person name="Ren X."/>
            <person name="Wang J."/>
            <person name="Wang X."/>
            <person name="Li D."/>
            <person name="Liu D."/>
            <person name="Zhang X."/>
            <person name="Ji Z."/>
            <person name="Zhao W."/>
            <person name="Sun Y."/>
            <person name="Zhang Z."/>
            <person name="Bao J."/>
            <person name="Han Y."/>
            <person name="Dong L."/>
            <person name="Ji J."/>
            <person name="Chen P."/>
            <person name="Wu S."/>
            <person name="Liu J."/>
            <person name="Xiao Y."/>
            <person name="Bu D."/>
            <person name="Tan J."/>
            <person name="Yang L."/>
            <person name="Ye C."/>
            <person name="Zhang J."/>
            <person name="Xu J."/>
            <person name="Zhou Y."/>
            <person name="Yu Y."/>
            <person name="Zhang B."/>
            <person name="Zhuang S."/>
            <person name="Wei H."/>
            <person name="Liu B."/>
            <person name="Lei M."/>
            <person name="Yu H."/>
            <person name="Li Y."/>
            <person name="Xu H."/>
            <person name="Wei S."/>
            <person name="He X."/>
            <person name="Fang L."/>
            <person name="Zhang Z."/>
            <person name="Zhang Y."/>
            <person name="Huang X."/>
            <person name="Su Z."/>
            <person name="Tong W."/>
            <person name="Li J."/>
            <person name="Tong Z."/>
            <person name="Li S."/>
            <person name="Ye J."/>
            <person name="Wang L."/>
            <person name="Fang L."/>
            <person name="Lei T."/>
            <person name="Chen C.-S."/>
            <person name="Chen H.-C."/>
            <person name="Xu Z."/>
            <person name="Li H."/>
            <person name="Huang H."/>
            <person name="Zhang F."/>
            <person name="Xu H."/>
            <person name="Li N."/>
            <person name="Zhao C."/>
            <person name="Li S."/>
            <person name="Dong L."/>
            <person name="Huang Y."/>
            <person name="Li L."/>
            <person name="Xi Y."/>
            <person name="Qi Q."/>
            <person name="Li W."/>
            <person name="Zhang B."/>
            <person name="Hu W."/>
            <person name="Zhang Y."/>
            <person name="Tian X."/>
            <person name="Jiao Y."/>
            <person name="Liang X."/>
            <person name="Jin J."/>
            <person name="Gao L."/>
            <person name="Zheng W."/>
            <person name="Hao B."/>
            <person name="Liu S.-M."/>
            <person name="Wang W."/>
            <person name="Yuan L."/>
            <person name="Cao M."/>
            <person name="McDermott J."/>
            <person name="Samudrala R."/>
            <person name="Wang J."/>
            <person name="Wong G.K.-S."/>
            <person name="Yang H."/>
        </authorList>
    </citation>
    <scope>NUCLEOTIDE SEQUENCE [LARGE SCALE GENOMIC DNA]</scope>
    <source>
        <strain>cv. 93-11</strain>
    </source>
</reference>
<dbReference type="EMBL" id="AF019212">
    <property type="protein sequence ID" value="AAD10240.1"/>
    <property type="molecule type" value="Genomic_DNA"/>
</dbReference>
<dbReference type="EMBL" id="CM000128">
    <property type="protein sequence ID" value="EAY91515.1"/>
    <property type="molecule type" value="Genomic_DNA"/>
</dbReference>
<dbReference type="STRING" id="39946.A2XL05"/>
<dbReference type="EnsemblPlants" id="BGIOSGA009987-TA">
    <property type="protein sequence ID" value="BGIOSGA009987-PA"/>
    <property type="gene ID" value="BGIOSGA009987"/>
</dbReference>
<dbReference type="EnsemblPlants" id="OsGoSa_03g0030800.01">
    <property type="protein sequence ID" value="OsGoSa_03g0030800.01"/>
    <property type="gene ID" value="OsGoSa_03g0030800"/>
</dbReference>
<dbReference type="EnsemblPlants" id="OsIR64_03g0030410.01">
    <property type="protein sequence ID" value="OsIR64_03g0030410.01"/>
    <property type="gene ID" value="OsIR64_03g0030410"/>
</dbReference>
<dbReference type="EnsemblPlants" id="OsKYG_03g0030850.01">
    <property type="protein sequence ID" value="OsKYG_03g0030850.01"/>
    <property type="gene ID" value="OsKYG_03g0030850"/>
</dbReference>
<dbReference type="EnsemblPlants" id="OsLaMu_03g0030620.01">
    <property type="protein sequence ID" value="OsLaMu_03g0030620.01"/>
    <property type="gene ID" value="OsLaMu_03g0030620"/>
</dbReference>
<dbReference type="EnsemblPlants" id="OsLima_03g0030790.01">
    <property type="protein sequence ID" value="OsLima_03g0030790.01"/>
    <property type="gene ID" value="OsLima_03g0030790"/>
</dbReference>
<dbReference type="EnsemblPlants" id="OsLiXu_03g0030590.01">
    <property type="protein sequence ID" value="OsLiXu_03g0030590.01"/>
    <property type="gene ID" value="OsLiXu_03g0030590"/>
</dbReference>
<dbReference type="EnsemblPlants" id="OsMH63_03G030770_01">
    <property type="protein sequence ID" value="OsMH63_03G030770_01"/>
    <property type="gene ID" value="OsMH63_03G030770"/>
</dbReference>
<dbReference type="EnsemblPlants" id="OsPr106_03g0030720.01">
    <property type="protein sequence ID" value="OsPr106_03g0030720.01"/>
    <property type="gene ID" value="OsPr106_03g0030720"/>
</dbReference>
<dbReference type="EnsemblPlants" id="OsZS97_03G030720_01">
    <property type="protein sequence ID" value="OsZS97_03G030720_01"/>
    <property type="gene ID" value="OsZS97_03G030720"/>
</dbReference>
<dbReference type="Gramene" id="BGIOSGA009987-TA">
    <property type="protein sequence ID" value="BGIOSGA009987-PA"/>
    <property type="gene ID" value="BGIOSGA009987"/>
</dbReference>
<dbReference type="Gramene" id="OsGoSa_03g0030800.01">
    <property type="protein sequence ID" value="OsGoSa_03g0030800.01"/>
    <property type="gene ID" value="OsGoSa_03g0030800"/>
</dbReference>
<dbReference type="Gramene" id="OsIR64_03g0030410.01">
    <property type="protein sequence ID" value="OsIR64_03g0030410.01"/>
    <property type="gene ID" value="OsIR64_03g0030410"/>
</dbReference>
<dbReference type="Gramene" id="OsKYG_03g0030850.01">
    <property type="protein sequence ID" value="OsKYG_03g0030850.01"/>
    <property type="gene ID" value="OsKYG_03g0030850"/>
</dbReference>
<dbReference type="Gramene" id="OsLaMu_03g0030620.01">
    <property type="protein sequence ID" value="OsLaMu_03g0030620.01"/>
    <property type="gene ID" value="OsLaMu_03g0030620"/>
</dbReference>
<dbReference type="Gramene" id="OsLima_03g0030790.01">
    <property type="protein sequence ID" value="OsLima_03g0030790.01"/>
    <property type="gene ID" value="OsLima_03g0030790"/>
</dbReference>
<dbReference type="Gramene" id="OsLiXu_03g0030590.01">
    <property type="protein sequence ID" value="OsLiXu_03g0030590.01"/>
    <property type="gene ID" value="OsLiXu_03g0030590"/>
</dbReference>
<dbReference type="Gramene" id="OsMH63_03G030770_01">
    <property type="protein sequence ID" value="OsMH63_03G030770_01"/>
    <property type="gene ID" value="OsMH63_03G030770"/>
</dbReference>
<dbReference type="Gramene" id="OsPr106_03g0030720.01">
    <property type="protein sequence ID" value="OsPr106_03g0030720.01"/>
    <property type="gene ID" value="OsPr106_03g0030720"/>
</dbReference>
<dbReference type="Gramene" id="OsZS97_03G030720_01">
    <property type="protein sequence ID" value="OsZS97_03G030720_01"/>
    <property type="gene ID" value="OsZS97_03G030720"/>
</dbReference>
<dbReference type="HOGENOM" id="CLU_101983_1_1_1"/>
<dbReference type="OMA" id="SWVTNYL"/>
<dbReference type="Proteomes" id="UP000007015">
    <property type="component" value="Chromosome 3"/>
</dbReference>
<dbReference type="GO" id="GO:0016020">
    <property type="term" value="C:membrane"/>
    <property type="evidence" value="ECO:0007669"/>
    <property type="project" value="UniProtKB-SubCell"/>
</dbReference>
<dbReference type="GO" id="GO:0012511">
    <property type="term" value="C:monolayer-surrounded lipid storage body"/>
    <property type="evidence" value="ECO:0007669"/>
    <property type="project" value="InterPro"/>
</dbReference>
<dbReference type="GO" id="GO:0019915">
    <property type="term" value="P:lipid storage"/>
    <property type="evidence" value="ECO:0007669"/>
    <property type="project" value="TreeGrafter"/>
</dbReference>
<dbReference type="GO" id="GO:0050826">
    <property type="term" value="P:response to freezing"/>
    <property type="evidence" value="ECO:0007669"/>
    <property type="project" value="TreeGrafter"/>
</dbReference>
<dbReference type="GO" id="GO:0010344">
    <property type="term" value="P:seed oilbody biogenesis"/>
    <property type="evidence" value="ECO:0007669"/>
    <property type="project" value="TreeGrafter"/>
</dbReference>
<dbReference type="InterPro" id="IPR000136">
    <property type="entry name" value="Oleosin"/>
</dbReference>
<dbReference type="PANTHER" id="PTHR33203">
    <property type="entry name" value="OLEOSIN"/>
    <property type="match status" value="1"/>
</dbReference>
<dbReference type="PANTHER" id="PTHR33203:SF44">
    <property type="entry name" value="OLEOSIN 20.3 KDA"/>
    <property type="match status" value="1"/>
</dbReference>
<dbReference type="Pfam" id="PF01277">
    <property type="entry name" value="Oleosin"/>
    <property type="match status" value="1"/>
</dbReference>
<dbReference type="PROSITE" id="PS00811">
    <property type="entry name" value="OLEOSINS"/>
    <property type="match status" value="1"/>
</dbReference>
<organism>
    <name type="scientific">Oryza sativa subsp. indica</name>
    <name type="common">Rice</name>
    <dbReference type="NCBI Taxonomy" id="39946"/>
    <lineage>
        <taxon>Eukaryota</taxon>
        <taxon>Viridiplantae</taxon>
        <taxon>Streptophyta</taxon>
        <taxon>Embryophyta</taxon>
        <taxon>Tracheophyta</taxon>
        <taxon>Spermatophyta</taxon>
        <taxon>Magnoliopsida</taxon>
        <taxon>Liliopsida</taxon>
        <taxon>Poales</taxon>
        <taxon>Poaceae</taxon>
        <taxon>BOP clade</taxon>
        <taxon>Oryzoideae</taxon>
        <taxon>Oryzeae</taxon>
        <taxon>Oryzinae</taxon>
        <taxon>Oryza</taxon>
        <taxon>Oryza sativa</taxon>
    </lineage>
</organism>
<keyword id="KW-0007">Acetylation</keyword>
<keyword id="KW-0551">Lipid droplet</keyword>
<keyword id="KW-0472">Membrane</keyword>
<keyword id="KW-1185">Reference proteome</keyword>
<keyword id="KW-0677">Repeat</keyword>
<keyword id="KW-0812">Transmembrane</keyword>
<keyword id="KW-1133">Transmembrane helix</keyword>
<proteinExistence type="inferred from homology"/>
<name>OLEO2_ORYSI</name>
<protein>
    <recommendedName>
        <fullName>Oleosin 18 kDa</fullName>
    </recommendedName>
    <alternativeName>
        <fullName>OSE721</fullName>
    </alternativeName>
</protein>
<gene>
    <name type="primary">OLE18</name>
    <name type="ORF">OsI_012748</name>
</gene>
<accession>A2XL05</accession>
<accession>Q40646</accession>
<accession>Q71VC0</accession>
<accession>Q851S5</accession>
<evidence type="ECO:0000250" key="1"/>
<evidence type="ECO:0000255" key="2"/>
<evidence type="ECO:0000256" key="3">
    <source>
        <dbReference type="SAM" id="MobiDB-lite"/>
    </source>
</evidence>
<evidence type="ECO:0000305" key="4"/>